<feature type="chain" id="PRO_1000003231" description="Ribosome-recycling factor">
    <location>
        <begin position="1"/>
        <end position="185"/>
    </location>
</feature>
<comment type="function">
    <text evidence="1">Responsible for the release of ribosomes from messenger RNA at the termination of protein biosynthesis. May increase the efficiency of translation by recycling ribosomes from one round of translation to another.</text>
</comment>
<comment type="subcellular location">
    <subcellularLocation>
        <location evidence="1">Cytoplasm</location>
    </subcellularLocation>
</comment>
<comment type="similarity">
    <text evidence="1">Belongs to the RRF family.</text>
</comment>
<sequence>MINEIKKEAQERMGKTLEALGHAFAKIRTGRAHPSILDSVMVSYYGADTPLRQVANVTVEDSRTLALAVFDKSMIQAVEKAIMTSDLGLNPATAGTTIRVPMPALTEETRKGYTKQARAEAEQARVSVRNIRRDALAQLKDLQKEKEISEDEERRAGDDVQKLTDKFIGEIEKALEAKEADLMAV</sequence>
<proteinExistence type="inferred from homology"/>
<organism>
    <name type="scientific">Pseudomonas aeruginosa (strain UCBPP-PA14)</name>
    <dbReference type="NCBI Taxonomy" id="208963"/>
    <lineage>
        <taxon>Bacteria</taxon>
        <taxon>Pseudomonadati</taxon>
        <taxon>Pseudomonadota</taxon>
        <taxon>Gammaproteobacteria</taxon>
        <taxon>Pseudomonadales</taxon>
        <taxon>Pseudomonadaceae</taxon>
        <taxon>Pseudomonas</taxon>
    </lineage>
</organism>
<accession>Q02RC5</accession>
<name>RRF_PSEAB</name>
<protein>
    <recommendedName>
        <fullName evidence="1">Ribosome-recycling factor</fullName>
        <shortName evidence="1">RRF</shortName>
    </recommendedName>
    <alternativeName>
        <fullName evidence="1">Ribosome-releasing factor</fullName>
    </alternativeName>
</protein>
<gene>
    <name evidence="1" type="primary">frr</name>
    <name type="ordered locus">PA14_17100</name>
</gene>
<dbReference type="EMBL" id="CP000438">
    <property type="protein sequence ID" value="ABJ12886.1"/>
    <property type="molecule type" value="Genomic_DNA"/>
</dbReference>
<dbReference type="RefSeq" id="WP_003092390.1">
    <property type="nucleotide sequence ID" value="NZ_CP034244.1"/>
</dbReference>
<dbReference type="BMRB" id="Q02RC5"/>
<dbReference type="SMR" id="Q02RC5"/>
<dbReference type="KEGG" id="pau:PA14_17100"/>
<dbReference type="PseudoCAP" id="PA14_17100"/>
<dbReference type="HOGENOM" id="CLU_073981_2_1_6"/>
<dbReference type="BioCyc" id="PAER208963:G1G74-1408-MONOMER"/>
<dbReference type="Proteomes" id="UP000000653">
    <property type="component" value="Chromosome"/>
</dbReference>
<dbReference type="GO" id="GO:0005829">
    <property type="term" value="C:cytosol"/>
    <property type="evidence" value="ECO:0007669"/>
    <property type="project" value="GOC"/>
</dbReference>
<dbReference type="GO" id="GO:0043023">
    <property type="term" value="F:ribosomal large subunit binding"/>
    <property type="evidence" value="ECO:0007669"/>
    <property type="project" value="TreeGrafter"/>
</dbReference>
<dbReference type="GO" id="GO:0002184">
    <property type="term" value="P:cytoplasmic translational termination"/>
    <property type="evidence" value="ECO:0007669"/>
    <property type="project" value="TreeGrafter"/>
</dbReference>
<dbReference type="CDD" id="cd00520">
    <property type="entry name" value="RRF"/>
    <property type="match status" value="1"/>
</dbReference>
<dbReference type="FunFam" id="1.10.132.20:FF:000001">
    <property type="entry name" value="Ribosome-recycling factor"/>
    <property type="match status" value="1"/>
</dbReference>
<dbReference type="FunFam" id="3.30.1360.40:FF:000001">
    <property type="entry name" value="Ribosome-recycling factor"/>
    <property type="match status" value="1"/>
</dbReference>
<dbReference type="Gene3D" id="3.30.1360.40">
    <property type="match status" value="1"/>
</dbReference>
<dbReference type="Gene3D" id="1.10.132.20">
    <property type="entry name" value="Ribosome-recycling factor"/>
    <property type="match status" value="1"/>
</dbReference>
<dbReference type="HAMAP" id="MF_00040">
    <property type="entry name" value="RRF"/>
    <property type="match status" value="1"/>
</dbReference>
<dbReference type="InterPro" id="IPR002661">
    <property type="entry name" value="Ribosome_recyc_fac"/>
</dbReference>
<dbReference type="InterPro" id="IPR023584">
    <property type="entry name" value="Ribosome_recyc_fac_dom"/>
</dbReference>
<dbReference type="InterPro" id="IPR036191">
    <property type="entry name" value="RRF_sf"/>
</dbReference>
<dbReference type="NCBIfam" id="TIGR00496">
    <property type="entry name" value="frr"/>
    <property type="match status" value="1"/>
</dbReference>
<dbReference type="PANTHER" id="PTHR20982:SF3">
    <property type="entry name" value="MITOCHONDRIAL RIBOSOME RECYCLING FACTOR PSEUDO 1"/>
    <property type="match status" value="1"/>
</dbReference>
<dbReference type="PANTHER" id="PTHR20982">
    <property type="entry name" value="RIBOSOME RECYCLING FACTOR"/>
    <property type="match status" value="1"/>
</dbReference>
<dbReference type="Pfam" id="PF01765">
    <property type="entry name" value="RRF"/>
    <property type="match status" value="1"/>
</dbReference>
<dbReference type="SUPFAM" id="SSF55194">
    <property type="entry name" value="Ribosome recycling factor, RRF"/>
    <property type="match status" value="1"/>
</dbReference>
<keyword id="KW-0963">Cytoplasm</keyword>
<keyword id="KW-0648">Protein biosynthesis</keyword>
<reference key="1">
    <citation type="journal article" date="2006" name="Genome Biol.">
        <title>Genomic analysis reveals that Pseudomonas aeruginosa virulence is combinatorial.</title>
        <authorList>
            <person name="Lee D.G."/>
            <person name="Urbach J.M."/>
            <person name="Wu G."/>
            <person name="Liberati N.T."/>
            <person name="Feinbaum R.L."/>
            <person name="Miyata S."/>
            <person name="Diggins L.T."/>
            <person name="He J."/>
            <person name="Saucier M."/>
            <person name="Deziel E."/>
            <person name="Friedman L."/>
            <person name="Li L."/>
            <person name="Grills G."/>
            <person name="Montgomery K."/>
            <person name="Kucherlapati R."/>
            <person name="Rahme L.G."/>
            <person name="Ausubel F.M."/>
        </authorList>
    </citation>
    <scope>NUCLEOTIDE SEQUENCE [LARGE SCALE GENOMIC DNA]</scope>
    <source>
        <strain>UCBPP-PA14</strain>
    </source>
</reference>
<evidence type="ECO:0000255" key="1">
    <source>
        <dbReference type="HAMAP-Rule" id="MF_00040"/>
    </source>
</evidence>